<comment type="function">
    <text evidence="1">One of two assembly initiator proteins, it binds directly to the 5'-end of the 23S rRNA, where it nucleates assembly of the 50S subunit.</text>
</comment>
<comment type="function">
    <text evidence="1">One of the proteins that surrounds the polypeptide exit tunnel on the outside of the subunit.</text>
</comment>
<comment type="subunit">
    <text evidence="1">Part of the 50S ribosomal subunit.</text>
</comment>
<comment type="similarity">
    <text evidence="1">Belongs to the universal ribosomal protein uL24 family.</text>
</comment>
<protein>
    <recommendedName>
        <fullName evidence="1">Large ribosomal subunit protein uL24</fullName>
    </recommendedName>
    <alternativeName>
        <fullName evidence="2">50S ribosomal protein L24</fullName>
    </alternativeName>
</protein>
<name>RL24_ROSCS</name>
<feature type="chain" id="PRO_1000086490" description="Large ribosomal subunit protein uL24">
    <location>
        <begin position="1"/>
        <end position="110"/>
    </location>
</feature>
<organism>
    <name type="scientific">Roseiflexus castenholzii (strain DSM 13941 / HLO8)</name>
    <dbReference type="NCBI Taxonomy" id="383372"/>
    <lineage>
        <taxon>Bacteria</taxon>
        <taxon>Bacillati</taxon>
        <taxon>Chloroflexota</taxon>
        <taxon>Chloroflexia</taxon>
        <taxon>Chloroflexales</taxon>
        <taxon>Roseiflexineae</taxon>
        <taxon>Roseiflexaceae</taxon>
        <taxon>Roseiflexus</taxon>
    </lineage>
</organism>
<gene>
    <name evidence="1" type="primary">rplX</name>
    <name type="ordered locus">Rcas_4015</name>
</gene>
<proteinExistence type="inferred from homology"/>
<sequence>MHVKTGDEVLIITGKDRGKRGKIKESRPKEQRVIVEGLNIVKRHMKPRGPTRPGGIIEMEAPIHVSNVMLICPKCGRASRTGHRFLEETDHKGRPKKVRYCKACDAVIDE</sequence>
<dbReference type="EMBL" id="CP000804">
    <property type="protein sequence ID" value="ABU60048.1"/>
    <property type="molecule type" value="Genomic_DNA"/>
</dbReference>
<dbReference type="RefSeq" id="WP_012122470.1">
    <property type="nucleotide sequence ID" value="NC_009767.1"/>
</dbReference>
<dbReference type="SMR" id="A7NR52"/>
<dbReference type="STRING" id="383372.Rcas_4015"/>
<dbReference type="KEGG" id="rca:Rcas_4015"/>
<dbReference type="eggNOG" id="COG0198">
    <property type="taxonomic scope" value="Bacteria"/>
</dbReference>
<dbReference type="HOGENOM" id="CLU_093315_2_0_0"/>
<dbReference type="OrthoDB" id="9807419at2"/>
<dbReference type="Proteomes" id="UP000000263">
    <property type="component" value="Chromosome"/>
</dbReference>
<dbReference type="GO" id="GO:1990904">
    <property type="term" value="C:ribonucleoprotein complex"/>
    <property type="evidence" value="ECO:0007669"/>
    <property type="project" value="UniProtKB-KW"/>
</dbReference>
<dbReference type="GO" id="GO:0005840">
    <property type="term" value="C:ribosome"/>
    <property type="evidence" value="ECO:0007669"/>
    <property type="project" value="UniProtKB-KW"/>
</dbReference>
<dbReference type="GO" id="GO:0019843">
    <property type="term" value="F:rRNA binding"/>
    <property type="evidence" value="ECO:0007669"/>
    <property type="project" value="UniProtKB-UniRule"/>
</dbReference>
<dbReference type="GO" id="GO:0003735">
    <property type="term" value="F:structural constituent of ribosome"/>
    <property type="evidence" value="ECO:0007669"/>
    <property type="project" value="InterPro"/>
</dbReference>
<dbReference type="GO" id="GO:0006412">
    <property type="term" value="P:translation"/>
    <property type="evidence" value="ECO:0007669"/>
    <property type="project" value="UniProtKB-UniRule"/>
</dbReference>
<dbReference type="CDD" id="cd06089">
    <property type="entry name" value="KOW_RPL26"/>
    <property type="match status" value="1"/>
</dbReference>
<dbReference type="FunFam" id="2.30.30.30:FF:000004">
    <property type="entry name" value="50S ribosomal protein L24"/>
    <property type="match status" value="1"/>
</dbReference>
<dbReference type="Gene3D" id="2.30.30.30">
    <property type="match status" value="1"/>
</dbReference>
<dbReference type="HAMAP" id="MF_01326_B">
    <property type="entry name" value="Ribosomal_uL24_B"/>
    <property type="match status" value="1"/>
</dbReference>
<dbReference type="InterPro" id="IPR005824">
    <property type="entry name" value="KOW"/>
</dbReference>
<dbReference type="InterPro" id="IPR014722">
    <property type="entry name" value="Rib_uL2_dom2"/>
</dbReference>
<dbReference type="InterPro" id="IPR003256">
    <property type="entry name" value="Ribosomal_uL24"/>
</dbReference>
<dbReference type="InterPro" id="IPR005825">
    <property type="entry name" value="Ribosomal_uL24_CS"/>
</dbReference>
<dbReference type="InterPro" id="IPR041988">
    <property type="entry name" value="Ribosomal_uL24_KOW"/>
</dbReference>
<dbReference type="InterPro" id="IPR008991">
    <property type="entry name" value="Translation_prot_SH3-like_sf"/>
</dbReference>
<dbReference type="NCBIfam" id="TIGR01079">
    <property type="entry name" value="rplX_bact"/>
    <property type="match status" value="1"/>
</dbReference>
<dbReference type="PANTHER" id="PTHR12903">
    <property type="entry name" value="MITOCHONDRIAL RIBOSOMAL PROTEIN L24"/>
    <property type="match status" value="1"/>
</dbReference>
<dbReference type="Pfam" id="PF00467">
    <property type="entry name" value="KOW"/>
    <property type="match status" value="1"/>
</dbReference>
<dbReference type="Pfam" id="PF17136">
    <property type="entry name" value="ribosomal_L24"/>
    <property type="match status" value="1"/>
</dbReference>
<dbReference type="SMART" id="SM00739">
    <property type="entry name" value="KOW"/>
    <property type="match status" value="1"/>
</dbReference>
<dbReference type="SUPFAM" id="SSF50104">
    <property type="entry name" value="Translation proteins SH3-like domain"/>
    <property type="match status" value="1"/>
</dbReference>
<dbReference type="PROSITE" id="PS01108">
    <property type="entry name" value="RIBOSOMAL_L24"/>
    <property type="match status" value="1"/>
</dbReference>
<evidence type="ECO:0000255" key="1">
    <source>
        <dbReference type="HAMAP-Rule" id="MF_01326"/>
    </source>
</evidence>
<evidence type="ECO:0000305" key="2"/>
<accession>A7NR52</accession>
<reference key="1">
    <citation type="submission" date="2007-08" db="EMBL/GenBank/DDBJ databases">
        <title>Complete sequence of Roseiflexus castenholzii DSM 13941.</title>
        <authorList>
            <consortium name="US DOE Joint Genome Institute"/>
            <person name="Copeland A."/>
            <person name="Lucas S."/>
            <person name="Lapidus A."/>
            <person name="Barry K."/>
            <person name="Glavina del Rio T."/>
            <person name="Dalin E."/>
            <person name="Tice H."/>
            <person name="Pitluck S."/>
            <person name="Thompson L.S."/>
            <person name="Brettin T."/>
            <person name="Bruce D."/>
            <person name="Detter J.C."/>
            <person name="Han C."/>
            <person name="Tapia R."/>
            <person name="Schmutz J."/>
            <person name="Larimer F."/>
            <person name="Land M."/>
            <person name="Hauser L."/>
            <person name="Kyrpides N."/>
            <person name="Mikhailova N."/>
            <person name="Bryant D.A."/>
            <person name="Hanada S."/>
            <person name="Tsukatani Y."/>
            <person name="Richardson P."/>
        </authorList>
    </citation>
    <scope>NUCLEOTIDE SEQUENCE [LARGE SCALE GENOMIC DNA]</scope>
    <source>
        <strain>DSM 13941 / HLO8</strain>
    </source>
</reference>
<keyword id="KW-1185">Reference proteome</keyword>
<keyword id="KW-0687">Ribonucleoprotein</keyword>
<keyword id="KW-0689">Ribosomal protein</keyword>
<keyword id="KW-0694">RNA-binding</keyword>
<keyword id="KW-0699">rRNA-binding</keyword>